<protein>
    <recommendedName>
        <fullName evidence="1">Formate-dependent phosphoribosylglycinamide formyltransferase</fullName>
        <ecNumber evidence="1">6.3.1.21</ecNumber>
    </recommendedName>
    <alternativeName>
        <fullName evidence="1">5'-phosphoribosylglycinamide transformylase 2</fullName>
    </alternativeName>
    <alternativeName>
        <fullName evidence="1">Formate-dependent GAR transformylase</fullName>
    </alternativeName>
    <alternativeName>
        <fullName evidence="1">GAR transformylase 2</fullName>
        <shortName evidence="1">GART 2</shortName>
    </alternativeName>
    <alternativeName>
        <fullName evidence="1">Non-folate glycinamide ribonucleotide transformylase</fullName>
    </alternativeName>
    <alternativeName>
        <fullName evidence="1">Phosphoribosylglycinamide formyltransferase 2</fullName>
    </alternativeName>
</protein>
<proteinExistence type="inferred from homology"/>
<reference key="1">
    <citation type="journal article" date="2003" name="Mol. Microbiol.">
        <title>An integrated analysis of the genome of the hyperthermophilic archaeon Pyrococcus abyssi.</title>
        <authorList>
            <person name="Cohen G.N."/>
            <person name="Barbe V."/>
            <person name="Flament D."/>
            <person name="Galperin M."/>
            <person name="Heilig R."/>
            <person name="Lecompte O."/>
            <person name="Poch O."/>
            <person name="Prieur D."/>
            <person name="Querellou J."/>
            <person name="Ripp R."/>
            <person name="Thierry J.-C."/>
            <person name="Van der Oost J."/>
            <person name="Weissenbach J."/>
            <person name="Zivanovic Y."/>
            <person name="Forterre P."/>
        </authorList>
    </citation>
    <scope>NUCLEOTIDE SEQUENCE [LARGE SCALE GENOMIC DNA]</scope>
    <source>
        <strain>GE5 / Orsay</strain>
    </source>
</reference>
<reference key="2">
    <citation type="journal article" date="2012" name="Curr. Microbiol.">
        <title>Re-annotation of two hyperthermophilic archaea Pyrococcus abyssi GE5 and Pyrococcus furiosus DSM 3638.</title>
        <authorList>
            <person name="Gao J."/>
            <person name="Wang J."/>
        </authorList>
    </citation>
    <scope>GENOME REANNOTATION</scope>
    <source>
        <strain>GE5 / Orsay</strain>
    </source>
</reference>
<feature type="chain" id="PRO_0000319283" description="Formate-dependent phosphoribosylglycinamide formyltransferase">
    <location>
        <begin position="1"/>
        <end position="429"/>
    </location>
</feature>
<feature type="domain" description="ATP-grasp" evidence="1">
    <location>
        <begin position="123"/>
        <end position="319"/>
    </location>
</feature>
<feature type="binding site" evidence="1">
    <location>
        <begin position="26"/>
        <end position="27"/>
    </location>
    <ligand>
        <name>N(1)-(5-phospho-beta-D-ribosyl)glycinamide</name>
        <dbReference type="ChEBI" id="CHEBI:143788"/>
    </ligand>
</feature>
<feature type="binding site" evidence="1">
    <location>
        <position position="86"/>
    </location>
    <ligand>
        <name>N(1)-(5-phospho-beta-D-ribosyl)glycinamide</name>
        <dbReference type="ChEBI" id="CHEBI:143788"/>
    </ligand>
</feature>
<feature type="binding site" evidence="1">
    <location>
        <position position="118"/>
    </location>
    <ligand>
        <name>ATP</name>
        <dbReference type="ChEBI" id="CHEBI:30616"/>
    </ligand>
</feature>
<feature type="binding site" evidence="1">
    <location>
        <position position="159"/>
    </location>
    <ligand>
        <name>ATP</name>
        <dbReference type="ChEBI" id="CHEBI:30616"/>
    </ligand>
</feature>
<feature type="binding site" evidence="1">
    <location>
        <begin position="199"/>
        <end position="202"/>
    </location>
    <ligand>
        <name>ATP</name>
        <dbReference type="ChEBI" id="CHEBI:30616"/>
    </ligand>
</feature>
<feature type="binding site" evidence="1">
    <location>
        <position position="207"/>
    </location>
    <ligand>
        <name>ATP</name>
        <dbReference type="ChEBI" id="CHEBI:30616"/>
    </ligand>
</feature>
<feature type="binding site" evidence="1">
    <location>
        <position position="276"/>
    </location>
    <ligand>
        <name>Mg(2+)</name>
        <dbReference type="ChEBI" id="CHEBI:18420"/>
    </ligand>
</feature>
<feature type="binding site" evidence="1">
    <location>
        <position position="288"/>
    </location>
    <ligand>
        <name>Mg(2+)</name>
        <dbReference type="ChEBI" id="CHEBI:18420"/>
    </ligand>
</feature>
<feature type="binding site" evidence="1">
    <location>
        <position position="295"/>
    </location>
    <ligand>
        <name>N(1)-(5-phospho-beta-D-ribosyl)glycinamide</name>
        <dbReference type="ChEBI" id="CHEBI:143788"/>
    </ligand>
</feature>
<feature type="binding site" evidence="1">
    <location>
        <position position="375"/>
    </location>
    <ligand>
        <name>N(1)-(5-phospho-beta-D-ribosyl)glycinamide</name>
        <dbReference type="ChEBI" id="CHEBI:143788"/>
    </ligand>
</feature>
<feature type="binding site" evidence="1">
    <location>
        <begin position="382"/>
        <end position="383"/>
    </location>
    <ligand>
        <name>N(1)-(5-phospho-beta-D-ribosyl)glycinamide</name>
        <dbReference type="ChEBI" id="CHEBI:143788"/>
    </ligand>
</feature>
<accession>Q9UY67</accession>
<accession>G8ZJZ5</accession>
<dbReference type="EC" id="6.3.1.21" evidence="1"/>
<dbReference type="EMBL" id="AJ248288">
    <property type="protein sequence ID" value="CAB50545.1"/>
    <property type="molecule type" value="Genomic_DNA"/>
</dbReference>
<dbReference type="EMBL" id="HE613800">
    <property type="protein sequence ID" value="CCE71102.1"/>
    <property type="molecule type" value="Genomic_DNA"/>
</dbReference>
<dbReference type="PIR" id="C75013">
    <property type="entry name" value="C75013"/>
</dbReference>
<dbReference type="RefSeq" id="WP_010868759.1">
    <property type="nucleotide sequence ID" value="NC_000868.1"/>
</dbReference>
<dbReference type="SMR" id="Q9UY67"/>
<dbReference type="STRING" id="272844.PAB1268"/>
<dbReference type="KEGG" id="pab:PAB1268"/>
<dbReference type="PATRIC" id="fig|272844.11.peg.1750"/>
<dbReference type="eggNOG" id="arCOG01598">
    <property type="taxonomic scope" value="Archaea"/>
</dbReference>
<dbReference type="HOGENOM" id="CLU_011534_1_3_2"/>
<dbReference type="OrthoDB" id="9299at2157"/>
<dbReference type="PhylomeDB" id="Q9UY67"/>
<dbReference type="UniPathway" id="UPA00074">
    <property type="reaction ID" value="UER00127"/>
</dbReference>
<dbReference type="Proteomes" id="UP000000810">
    <property type="component" value="Chromosome"/>
</dbReference>
<dbReference type="Proteomes" id="UP000009139">
    <property type="component" value="Chromosome"/>
</dbReference>
<dbReference type="GO" id="GO:0005829">
    <property type="term" value="C:cytosol"/>
    <property type="evidence" value="ECO:0007669"/>
    <property type="project" value="TreeGrafter"/>
</dbReference>
<dbReference type="GO" id="GO:0005524">
    <property type="term" value="F:ATP binding"/>
    <property type="evidence" value="ECO:0007669"/>
    <property type="project" value="UniProtKB-UniRule"/>
</dbReference>
<dbReference type="GO" id="GO:0000287">
    <property type="term" value="F:magnesium ion binding"/>
    <property type="evidence" value="ECO:0007669"/>
    <property type="project" value="InterPro"/>
</dbReference>
<dbReference type="GO" id="GO:0043815">
    <property type="term" value="F:phosphoribosylglycinamide formyltransferase 2 activity"/>
    <property type="evidence" value="ECO:0007669"/>
    <property type="project" value="UniProtKB-UniRule"/>
</dbReference>
<dbReference type="GO" id="GO:0004644">
    <property type="term" value="F:phosphoribosylglycinamide formyltransferase activity"/>
    <property type="evidence" value="ECO:0007669"/>
    <property type="project" value="InterPro"/>
</dbReference>
<dbReference type="GO" id="GO:0006189">
    <property type="term" value="P:'de novo' IMP biosynthetic process"/>
    <property type="evidence" value="ECO:0007669"/>
    <property type="project" value="UniProtKB-UniRule"/>
</dbReference>
<dbReference type="FunFam" id="3.30.1490.20:FF:000013">
    <property type="entry name" value="Formate-dependent phosphoribosylglycinamide formyltransferase"/>
    <property type="match status" value="1"/>
</dbReference>
<dbReference type="FunFam" id="3.30.470.20:FF:000035">
    <property type="entry name" value="Formate-dependent phosphoribosylglycinamide formyltransferase"/>
    <property type="match status" value="1"/>
</dbReference>
<dbReference type="FunFam" id="3.40.50.20:FF:000022">
    <property type="entry name" value="Formate-dependent phosphoribosylglycinamide formyltransferase"/>
    <property type="match status" value="1"/>
</dbReference>
<dbReference type="Gene3D" id="3.40.50.20">
    <property type="match status" value="1"/>
</dbReference>
<dbReference type="Gene3D" id="3.30.1490.20">
    <property type="entry name" value="ATP-grasp fold, A domain"/>
    <property type="match status" value="1"/>
</dbReference>
<dbReference type="Gene3D" id="3.30.470.20">
    <property type="entry name" value="ATP-grasp fold, B domain"/>
    <property type="match status" value="1"/>
</dbReference>
<dbReference type="HAMAP" id="MF_01643">
    <property type="entry name" value="PurT"/>
    <property type="match status" value="1"/>
</dbReference>
<dbReference type="InterPro" id="IPR011761">
    <property type="entry name" value="ATP-grasp"/>
</dbReference>
<dbReference type="InterPro" id="IPR003135">
    <property type="entry name" value="ATP-grasp_carboxylate-amine"/>
</dbReference>
<dbReference type="InterPro" id="IPR013815">
    <property type="entry name" value="ATP_grasp_subdomain_1"/>
</dbReference>
<dbReference type="InterPro" id="IPR016185">
    <property type="entry name" value="PreATP-grasp_dom_sf"/>
</dbReference>
<dbReference type="InterPro" id="IPR005862">
    <property type="entry name" value="PurT"/>
</dbReference>
<dbReference type="InterPro" id="IPR054350">
    <property type="entry name" value="PurT/PurK_preATP-grasp"/>
</dbReference>
<dbReference type="InterPro" id="IPR048740">
    <property type="entry name" value="PurT_C"/>
</dbReference>
<dbReference type="InterPro" id="IPR011054">
    <property type="entry name" value="Rudment_hybrid_motif"/>
</dbReference>
<dbReference type="NCBIfam" id="NF006766">
    <property type="entry name" value="PRK09288.1"/>
    <property type="match status" value="1"/>
</dbReference>
<dbReference type="NCBIfam" id="TIGR01142">
    <property type="entry name" value="purT"/>
    <property type="match status" value="1"/>
</dbReference>
<dbReference type="PANTHER" id="PTHR43055">
    <property type="entry name" value="FORMATE-DEPENDENT PHOSPHORIBOSYLGLYCINAMIDE FORMYLTRANSFERASE"/>
    <property type="match status" value="1"/>
</dbReference>
<dbReference type="PANTHER" id="PTHR43055:SF1">
    <property type="entry name" value="FORMATE-DEPENDENT PHOSPHORIBOSYLGLYCINAMIDE FORMYLTRANSFERASE"/>
    <property type="match status" value="1"/>
</dbReference>
<dbReference type="Pfam" id="PF02222">
    <property type="entry name" value="ATP-grasp"/>
    <property type="match status" value="1"/>
</dbReference>
<dbReference type="Pfam" id="PF21244">
    <property type="entry name" value="PurT_C"/>
    <property type="match status" value="1"/>
</dbReference>
<dbReference type="Pfam" id="PF22660">
    <property type="entry name" value="RS_preATP-grasp-like"/>
    <property type="match status" value="1"/>
</dbReference>
<dbReference type="SUPFAM" id="SSF56059">
    <property type="entry name" value="Glutathione synthetase ATP-binding domain-like"/>
    <property type="match status" value="1"/>
</dbReference>
<dbReference type="SUPFAM" id="SSF52440">
    <property type="entry name" value="PreATP-grasp domain"/>
    <property type="match status" value="1"/>
</dbReference>
<dbReference type="SUPFAM" id="SSF51246">
    <property type="entry name" value="Rudiment single hybrid motif"/>
    <property type="match status" value="1"/>
</dbReference>
<dbReference type="PROSITE" id="PS50975">
    <property type="entry name" value="ATP_GRASP"/>
    <property type="match status" value="1"/>
</dbReference>
<evidence type="ECO:0000255" key="1">
    <source>
        <dbReference type="HAMAP-Rule" id="MF_01643"/>
    </source>
</evidence>
<sequence length="429" mass="48286">MIEPRDELGTATTDSAQKILLLGSGELGKEIAIEAQRLGVEVIAVDRYANAPAMQVAHRSYVGNMMDKDFLWSVVEREKPDAIIPEIEAINLDALFEFEKEGYFVVPNARATWIAMHRERLRETLVKEAKVPTSRYMYATTLDELYEACEKIGYPCHTKAIMSSSGKGSYFVKGPEDIPKAWEEAKTKARGSAEKIIVEEHIDFDVEITELAVRHFDENGEIVTTFPKPVGHYQIDGDYHASWQPAEISEKAEREVYRIAKRITDVLGGLGLFGVEMFVKGDKVWANEVSPRPHDTGMVTLASHPPGFSEFGLHLRAVLGLPIPGEWVDGYRLFPMLIPAATHVIKAKVKGYSPRFRGLAKALSVPNATVRLFGKPEAYVGRRLGVVLAWDKDVQEAKKRAEMVAHMIELRTRSSDWHDQNYEKRKHLL</sequence>
<comment type="function">
    <text evidence="1">Involved in the de novo purine biosynthesis. Catalyzes the transfer of formate to 5-phospho-ribosyl-glycinamide (GAR), producing 5-phospho-ribosyl-N-formylglycinamide (FGAR). Formate is provided by PurU via hydrolysis of 10-formyl-tetrahydrofolate.</text>
</comment>
<comment type="catalytic activity">
    <reaction evidence="1">
        <text>N(1)-(5-phospho-beta-D-ribosyl)glycinamide + formate + ATP = N(2)-formyl-N(1)-(5-phospho-beta-D-ribosyl)glycinamide + ADP + phosphate + H(+)</text>
        <dbReference type="Rhea" id="RHEA:24829"/>
        <dbReference type="ChEBI" id="CHEBI:15378"/>
        <dbReference type="ChEBI" id="CHEBI:15740"/>
        <dbReference type="ChEBI" id="CHEBI:30616"/>
        <dbReference type="ChEBI" id="CHEBI:43474"/>
        <dbReference type="ChEBI" id="CHEBI:143788"/>
        <dbReference type="ChEBI" id="CHEBI:147286"/>
        <dbReference type="ChEBI" id="CHEBI:456216"/>
        <dbReference type="EC" id="6.3.1.21"/>
    </reaction>
    <physiologicalReaction direction="left-to-right" evidence="1">
        <dbReference type="Rhea" id="RHEA:24830"/>
    </physiologicalReaction>
</comment>
<comment type="pathway">
    <text evidence="1">Purine metabolism; IMP biosynthesis via de novo pathway; N(2)-formyl-N(1)-(5-phospho-D-ribosyl)glycinamide from N(1)-(5-phospho-D-ribosyl)glycinamide (formate route): step 1/1.</text>
</comment>
<comment type="subunit">
    <text evidence="1">Homodimer.</text>
</comment>
<comment type="similarity">
    <text evidence="1">Belongs to the PurK/PurT family.</text>
</comment>
<keyword id="KW-0067">ATP-binding</keyword>
<keyword id="KW-0436">Ligase</keyword>
<keyword id="KW-0460">Magnesium</keyword>
<keyword id="KW-0479">Metal-binding</keyword>
<keyword id="KW-0547">Nucleotide-binding</keyword>
<keyword id="KW-0658">Purine biosynthesis</keyword>
<name>PURT_PYRAB</name>
<organism>
    <name type="scientific">Pyrococcus abyssi (strain GE5 / Orsay)</name>
    <dbReference type="NCBI Taxonomy" id="272844"/>
    <lineage>
        <taxon>Archaea</taxon>
        <taxon>Methanobacteriati</taxon>
        <taxon>Methanobacteriota</taxon>
        <taxon>Thermococci</taxon>
        <taxon>Thermococcales</taxon>
        <taxon>Thermococcaceae</taxon>
        <taxon>Pyrococcus</taxon>
    </lineage>
</organism>
<gene>
    <name evidence="1" type="primary">purT</name>
    <name type="ordered locus">PYRAB16410</name>
    <name type="ORF">PAB1268</name>
</gene>